<dbReference type="EMBL" id="X52314">
    <property type="protein sequence ID" value="CAA36551.1"/>
    <property type="molecule type" value="Genomic_DNA"/>
</dbReference>
<dbReference type="PIR" id="S11448">
    <property type="entry name" value="S11448"/>
</dbReference>
<dbReference type="SMR" id="P17804"/>
<dbReference type="VEuPathDB" id="TriTrypDB:LdBPK_283000.1"/>
<dbReference type="VEuPathDB" id="TriTrypDB:LdCL_280034900"/>
<dbReference type="VEuPathDB" id="TriTrypDB:LDHU3_28.3970"/>
<dbReference type="GO" id="GO:0005524">
    <property type="term" value="F:ATP binding"/>
    <property type="evidence" value="ECO:0007669"/>
    <property type="project" value="UniProtKB-KW"/>
</dbReference>
<dbReference type="GO" id="GO:0140662">
    <property type="term" value="F:ATP-dependent protein folding chaperone"/>
    <property type="evidence" value="ECO:0007669"/>
    <property type="project" value="InterPro"/>
</dbReference>
<dbReference type="CDD" id="cd10233">
    <property type="entry name" value="ASKHA_NBD_HSP70_HSPA1"/>
    <property type="match status" value="1"/>
</dbReference>
<dbReference type="FunFam" id="2.60.34.10:FF:000002">
    <property type="entry name" value="Heat shock 70 kDa"/>
    <property type="match status" value="1"/>
</dbReference>
<dbReference type="FunFam" id="3.90.640.10:FF:000002">
    <property type="entry name" value="Heat shock 70 kDa"/>
    <property type="match status" value="1"/>
</dbReference>
<dbReference type="FunFam" id="1.20.1270.10:FF:000055">
    <property type="entry name" value="Heat shock 70 kDa protein"/>
    <property type="match status" value="1"/>
</dbReference>
<dbReference type="FunFam" id="3.30.420.40:FF:000172">
    <property type="entry name" value="Heat shock 70 kDa protein"/>
    <property type="match status" value="2"/>
</dbReference>
<dbReference type="FunFam" id="3.30.30.30:FF:000001">
    <property type="entry name" value="heat shock 70 kDa protein-like"/>
    <property type="match status" value="1"/>
</dbReference>
<dbReference type="FunFam" id="3.30.420.40:FF:000026">
    <property type="entry name" value="Heat shock protein 70"/>
    <property type="match status" value="1"/>
</dbReference>
<dbReference type="Gene3D" id="1.20.1270.10">
    <property type="match status" value="1"/>
</dbReference>
<dbReference type="Gene3D" id="3.30.30.30">
    <property type="match status" value="1"/>
</dbReference>
<dbReference type="Gene3D" id="3.30.420.40">
    <property type="match status" value="2"/>
</dbReference>
<dbReference type="Gene3D" id="3.90.640.10">
    <property type="entry name" value="Actin, Chain A, domain 4"/>
    <property type="match status" value="1"/>
</dbReference>
<dbReference type="Gene3D" id="2.60.34.10">
    <property type="entry name" value="Substrate Binding Domain Of DNAk, Chain A, domain 1"/>
    <property type="match status" value="1"/>
</dbReference>
<dbReference type="InterPro" id="IPR043129">
    <property type="entry name" value="ATPase_NBD"/>
</dbReference>
<dbReference type="InterPro" id="IPR018181">
    <property type="entry name" value="Heat_shock_70_CS"/>
</dbReference>
<dbReference type="InterPro" id="IPR029048">
    <property type="entry name" value="HSP70_C_sf"/>
</dbReference>
<dbReference type="InterPro" id="IPR029047">
    <property type="entry name" value="HSP70_peptide-bd_sf"/>
</dbReference>
<dbReference type="InterPro" id="IPR013126">
    <property type="entry name" value="Hsp_70_fam"/>
</dbReference>
<dbReference type="NCBIfam" id="NF001413">
    <property type="entry name" value="PRK00290.1"/>
    <property type="match status" value="1"/>
</dbReference>
<dbReference type="PANTHER" id="PTHR19375">
    <property type="entry name" value="HEAT SHOCK PROTEIN 70KDA"/>
    <property type="match status" value="1"/>
</dbReference>
<dbReference type="Pfam" id="PF00012">
    <property type="entry name" value="HSP70"/>
    <property type="match status" value="1"/>
</dbReference>
<dbReference type="PRINTS" id="PR00301">
    <property type="entry name" value="HEATSHOCK70"/>
</dbReference>
<dbReference type="SUPFAM" id="SSF53067">
    <property type="entry name" value="Actin-like ATPase domain"/>
    <property type="match status" value="2"/>
</dbReference>
<dbReference type="SUPFAM" id="SSF100934">
    <property type="entry name" value="Heat shock protein 70kD (HSP70), C-terminal subdomain"/>
    <property type="match status" value="1"/>
</dbReference>
<dbReference type="SUPFAM" id="SSF100920">
    <property type="entry name" value="Heat shock protein 70kD (HSP70), peptide-binding domain"/>
    <property type="match status" value="1"/>
</dbReference>
<dbReference type="PROSITE" id="PS00297">
    <property type="entry name" value="HSP70_1"/>
    <property type="match status" value="1"/>
</dbReference>
<dbReference type="PROSITE" id="PS00329">
    <property type="entry name" value="HSP70_2"/>
    <property type="match status" value="1"/>
</dbReference>
<dbReference type="PROSITE" id="PS01036">
    <property type="entry name" value="HSP70_3"/>
    <property type="match status" value="1"/>
</dbReference>
<accession>P17804</accession>
<comment type="similarity">
    <text evidence="2">Belongs to the heat shock protein 70 family.</text>
</comment>
<reference key="1">
    <citation type="journal article" date="1990" name="Eur. J. Biochem.">
        <title>Identification and characterisation of a Leishmania donovani antigen belonging to the 70-kDa heat-shock protein family.</title>
        <authorList>
            <person name="Macfarlane J."/>
            <person name="Blaxter M.L."/>
            <person name="Bishop R.P."/>
            <person name="Miles M.A."/>
            <person name="Kelly J.M."/>
        </authorList>
    </citation>
    <scope>NUCLEOTIDE SEQUENCE [GENOMIC DNA]</scope>
    <source>
        <strain>MHOM/ET/67/HU3 / LV9</strain>
    </source>
</reference>
<feature type="chain" id="PRO_0000078304" description="Heat shock 70 kDa protein">
    <location>
        <begin position="1"/>
        <end position="653"/>
    </location>
</feature>
<feature type="region of interest" description="Disordered" evidence="1">
    <location>
        <begin position="616"/>
        <end position="653"/>
    </location>
</feature>
<feature type="compositionally biased region" description="Gly residues" evidence="1">
    <location>
        <begin position="633"/>
        <end position="644"/>
    </location>
</feature>
<gene>
    <name type="primary">HSP70</name>
</gene>
<keyword id="KW-0067">ATP-binding</keyword>
<keyword id="KW-0547">Nucleotide-binding</keyword>
<keyword id="KW-0346">Stress response</keyword>
<evidence type="ECO:0000256" key="1">
    <source>
        <dbReference type="SAM" id="MobiDB-lite"/>
    </source>
</evidence>
<evidence type="ECO:0000305" key="2"/>
<sequence>MTFDGAIGIDLGTTYSCVGVWQNERVDIIANDQGNRTTPSYVAFTDSERLIGDAAKNQVAMNPHNTVFDAKRLIGRKFNDSVVQSDMKHWPFKVTTKGDDKPMIAVQYRGEEKTFTPEEISSMVLLKMKETAEAYLGKQVKKAVVTVPAYFNDSQRQATKDAGTIAGLEVLRIINEPTRAIAYGLDKGDDGKERNVLIFDLGGGTFDVSLLTIDGGIFEVKATNGDTHLGGEDFDNRLVTFFTEEFKRKNKGKNLASSHRALRGLRTACERAKRTLSSATQATIEIDALFENVDFQATITRARFEELCGDLFRSTIQPVERVLQDAKMDKRSVHDVVLVGGSTRIPKVQSLVSDFFGGKELNKSINPDEAVAYGAAVQAFILTGGKSKQTEGLLLLDVTPLTLGIETAGGVMTALIKRNTTIPTKKSQIFSTYADNQPGVHIQVFEGERAMTKDCHLLGTFDLSGIPPAPRGVPQIEVTFDLDANGILNVSAEEKGTGKRNQITITNDKGRLSKDEIERMVNDAMKYEADDRAQRDRVEAKNGLENYAYSMKNTLGDSNVSGKLDDSDKATLNKEIDVTLEWLSSNQEATKEEYEHKQKELESVCNPIMTKMYQSMGGAGGGMPGGMPDMSGMSGGAGPAGGASSGPKVEEVD</sequence>
<protein>
    <recommendedName>
        <fullName>Heat shock 70 kDa protein</fullName>
    </recommendedName>
</protein>
<organism>
    <name type="scientific">Leishmania donovani</name>
    <dbReference type="NCBI Taxonomy" id="5661"/>
    <lineage>
        <taxon>Eukaryota</taxon>
        <taxon>Discoba</taxon>
        <taxon>Euglenozoa</taxon>
        <taxon>Kinetoplastea</taxon>
        <taxon>Metakinetoplastina</taxon>
        <taxon>Trypanosomatida</taxon>
        <taxon>Trypanosomatidae</taxon>
        <taxon>Leishmaniinae</taxon>
        <taxon>Leishmania</taxon>
    </lineage>
</organism>
<name>HSP70_LEIDO</name>
<proteinExistence type="inferred from homology"/>